<reference key="1">
    <citation type="journal article" date="2010" name="Appl. Environ. Microbiol.">
        <title>Conserved symbiotic plasmid DNA sequences in the multireplicon pangenomic structure of Rhizobium etli.</title>
        <authorList>
            <person name="Gonzalez V."/>
            <person name="Acosta J.L."/>
            <person name="Santamaria R.I."/>
            <person name="Bustos P."/>
            <person name="Fernandez J.L."/>
            <person name="Hernandez Gonzalez I.L."/>
            <person name="Diaz R."/>
            <person name="Flores M."/>
            <person name="Palacios R."/>
            <person name="Mora J."/>
            <person name="Davila G."/>
        </authorList>
    </citation>
    <scope>NUCLEOTIDE SEQUENCE [LARGE SCALE GENOMIC DNA]</scope>
    <source>
        <strain>CIAT 652</strain>
    </source>
</reference>
<organism>
    <name type="scientific">Rhizobium etli (strain CIAT 652)</name>
    <dbReference type="NCBI Taxonomy" id="491916"/>
    <lineage>
        <taxon>Bacteria</taxon>
        <taxon>Pseudomonadati</taxon>
        <taxon>Pseudomonadota</taxon>
        <taxon>Alphaproteobacteria</taxon>
        <taxon>Hyphomicrobiales</taxon>
        <taxon>Rhizobiaceae</taxon>
        <taxon>Rhizobium/Agrobacterium group</taxon>
        <taxon>Rhizobium</taxon>
    </lineage>
</organism>
<proteinExistence type="inferred from homology"/>
<evidence type="ECO:0000255" key="1">
    <source>
        <dbReference type="HAMAP-Rule" id="MF_01020"/>
    </source>
</evidence>
<comment type="catalytic activity">
    <reaction evidence="1">
        <text>1-(5-phospho-beta-D-ribosyl)-ATP + H2O = 1-(5-phospho-beta-D-ribosyl)-5'-AMP + diphosphate + H(+)</text>
        <dbReference type="Rhea" id="RHEA:22828"/>
        <dbReference type="ChEBI" id="CHEBI:15377"/>
        <dbReference type="ChEBI" id="CHEBI:15378"/>
        <dbReference type="ChEBI" id="CHEBI:33019"/>
        <dbReference type="ChEBI" id="CHEBI:59457"/>
        <dbReference type="ChEBI" id="CHEBI:73183"/>
        <dbReference type="EC" id="3.6.1.31"/>
    </reaction>
</comment>
<comment type="pathway">
    <text evidence="1">Amino-acid biosynthesis; L-histidine biosynthesis; L-histidine from 5-phospho-alpha-D-ribose 1-diphosphate: step 2/9.</text>
</comment>
<comment type="subcellular location">
    <subcellularLocation>
        <location evidence="1">Cytoplasm</location>
    </subcellularLocation>
</comment>
<comment type="similarity">
    <text evidence="1">Belongs to the PRA-PH family.</text>
</comment>
<gene>
    <name evidence="1" type="primary">hisE</name>
    <name type="ordered locus">RHECIAT_CH0000043</name>
</gene>
<dbReference type="EC" id="3.6.1.31" evidence="1"/>
<dbReference type="EMBL" id="CP001074">
    <property type="protein sequence ID" value="ACE89046.1"/>
    <property type="molecule type" value="Genomic_DNA"/>
</dbReference>
<dbReference type="SMR" id="B3PWH8"/>
<dbReference type="KEGG" id="rec:RHECIAT_CH0000043"/>
<dbReference type="eggNOG" id="COG0140">
    <property type="taxonomic scope" value="Bacteria"/>
</dbReference>
<dbReference type="HOGENOM" id="CLU_123337_1_1_5"/>
<dbReference type="UniPathway" id="UPA00031">
    <property type="reaction ID" value="UER00007"/>
</dbReference>
<dbReference type="Proteomes" id="UP000008817">
    <property type="component" value="Chromosome"/>
</dbReference>
<dbReference type="GO" id="GO:0005737">
    <property type="term" value="C:cytoplasm"/>
    <property type="evidence" value="ECO:0007669"/>
    <property type="project" value="UniProtKB-SubCell"/>
</dbReference>
<dbReference type="GO" id="GO:0005524">
    <property type="term" value="F:ATP binding"/>
    <property type="evidence" value="ECO:0007669"/>
    <property type="project" value="UniProtKB-KW"/>
</dbReference>
<dbReference type="GO" id="GO:0004636">
    <property type="term" value="F:phosphoribosyl-ATP diphosphatase activity"/>
    <property type="evidence" value="ECO:0007669"/>
    <property type="project" value="UniProtKB-UniRule"/>
</dbReference>
<dbReference type="GO" id="GO:0000105">
    <property type="term" value="P:L-histidine biosynthetic process"/>
    <property type="evidence" value="ECO:0007669"/>
    <property type="project" value="UniProtKB-UniRule"/>
</dbReference>
<dbReference type="CDD" id="cd11534">
    <property type="entry name" value="NTP-PPase_HisIE_like"/>
    <property type="match status" value="1"/>
</dbReference>
<dbReference type="Gene3D" id="1.10.287.1080">
    <property type="entry name" value="MazG-like"/>
    <property type="match status" value="1"/>
</dbReference>
<dbReference type="HAMAP" id="MF_01020">
    <property type="entry name" value="HisE"/>
    <property type="match status" value="1"/>
</dbReference>
<dbReference type="InterPro" id="IPR008179">
    <property type="entry name" value="HisE"/>
</dbReference>
<dbReference type="InterPro" id="IPR021130">
    <property type="entry name" value="PRib-ATP_PPHydrolase-like"/>
</dbReference>
<dbReference type="NCBIfam" id="TIGR03188">
    <property type="entry name" value="histidine_hisI"/>
    <property type="match status" value="1"/>
</dbReference>
<dbReference type="NCBIfam" id="NF001611">
    <property type="entry name" value="PRK00400.1-3"/>
    <property type="match status" value="1"/>
</dbReference>
<dbReference type="NCBIfam" id="NF001613">
    <property type="entry name" value="PRK00400.1-5"/>
    <property type="match status" value="1"/>
</dbReference>
<dbReference type="PANTHER" id="PTHR42945">
    <property type="entry name" value="HISTIDINE BIOSYNTHESIS BIFUNCTIONAL PROTEIN"/>
    <property type="match status" value="1"/>
</dbReference>
<dbReference type="PANTHER" id="PTHR42945:SF1">
    <property type="entry name" value="HISTIDINE BIOSYNTHESIS BIFUNCTIONAL PROTEIN HIS7"/>
    <property type="match status" value="1"/>
</dbReference>
<dbReference type="Pfam" id="PF01503">
    <property type="entry name" value="PRA-PH"/>
    <property type="match status" value="1"/>
</dbReference>
<dbReference type="SUPFAM" id="SSF101386">
    <property type="entry name" value="all-alpha NTP pyrophosphatases"/>
    <property type="match status" value="1"/>
</dbReference>
<keyword id="KW-0028">Amino-acid biosynthesis</keyword>
<keyword id="KW-0067">ATP-binding</keyword>
<keyword id="KW-0963">Cytoplasm</keyword>
<keyword id="KW-0368">Histidine biosynthesis</keyword>
<keyword id="KW-0378">Hydrolase</keyword>
<keyword id="KW-0547">Nucleotide-binding</keyword>
<name>HIS2_RHIE6</name>
<protein>
    <recommendedName>
        <fullName evidence="1">Phosphoribosyl-ATP pyrophosphatase</fullName>
        <shortName evidence="1">PRA-PH</shortName>
        <ecNumber evidence="1">3.6.1.31</ecNumber>
    </recommendedName>
</protein>
<feature type="chain" id="PRO_1000190388" description="Phosphoribosyl-ATP pyrophosphatase">
    <location>
        <begin position="1"/>
        <end position="107"/>
    </location>
</feature>
<sequence>MSGFSLADLERIVDERSKASPEQSWTAKLVAGGQPKAAKKLGEEAIEAVMAAATGDRDNLTYEAADVLYHLLVVLKIAEIPLENVMAELERRTAQSGLKEKANRQSS</sequence>
<accession>B3PWH8</accession>